<protein>
    <recommendedName>
        <fullName>Long-chain fatty acid transport protein</fullName>
    </recommendedName>
    <alternativeName>
        <fullName>Outer membrane FadL protein</fullName>
    </alternativeName>
    <alternativeName>
        <fullName>Outer membrane flp protein</fullName>
    </alternativeName>
</protein>
<organism>
    <name type="scientific">Shigella flexneri</name>
    <dbReference type="NCBI Taxonomy" id="623"/>
    <lineage>
        <taxon>Bacteria</taxon>
        <taxon>Pseudomonadati</taxon>
        <taxon>Pseudomonadota</taxon>
        <taxon>Gammaproteobacteria</taxon>
        <taxon>Enterobacterales</taxon>
        <taxon>Enterobacteriaceae</taxon>
        <taxon>Shigella</taxon>
    </lineage>
</organism>
<keyword id="KW-0998">Cell outer membrane</keyword>
<keyword id="KW-0445">Lipid transport</keyword>
<keyword id="KW-0472">Membrane</keyword>
<keyword id="KW-1185">Reference proteome</keyword>
<keyword id="KW-0732">Signal</keyword>
<keyword id="KW-0812">Transmembrane</keyword>
<keyword id="KW-1134">Transmembrane beta strand</keyword>
<keyword id="KW-0813">Transport</keyword>
<name>FADL_SHIFL</name>
<feature type="signal peptide" evidence="1">
    <location>
        <begin position="1"/>
        <end position="25"/>
    </location>
</feature>
<feature type="chain" id="PRO_0000025207" description="Long-chain fatty acid transport protein">
    <location>
        <begin position="26"/>
        <end position="446"/>
    </location>
</feature>
<dbReference type="EMBL" id="AE005674">
    <property type="protein sequence ID" value="AAN43932.2"/>
    <property type="molecule type" value="Genomic_DNA"/>
</dbReference>
<dbReference type="EMBL" id="AE014073">
    <property type="protein sequence ID" value="AAP17746.1"/>
    <property type="molecule type" value="Genomic_DNA"/>
</dbReference>
<dbReference type="RefSeq" id="NP_708225.2">
    <property type="nucleotide sequence ID" value="NC_004337.2"/>
</dbReference>
<dbReference type="RefSeq" id="WP_005047046.1">
    <property type="nucleotide sequence ID" value="NZ_WPGW01000166.1"/>
</dbReference>
<dbReference type="SMR" id="P59741"/>
<dbReference type="STRING" id="198214.SF2421"/>
<dbReference type="PaxDb" id="198214-SF2421"/>
<dbReference type="GeneID" id="1027343"/>
<dbReference type="KEGG" id="sfl:SF2421"/>
<dbReference type="KEGG" id="sfx:S2557"/>
<dbReference type="PATRIC" id="fig|198214.7.peg.2892"/>
<dbReference type="HOGENOM" id="CLU_035981_0_0_6"/>
<dbReference type="Proteomes" id="UP000001006">
    <property type="component" value="Chromosome"/>
</dbReference>
<dbReference type="Proteomes" id="UP000002673">
    <property type="component" value="Chromosome"/>
</dbReference>
<dbReference type="GO" id="GO:0009279">
    <property type="term" value="C:cell outer membrane"/>
    <property type="evidence" value="ECO:0007669"/>
    <property type="project" value="UniProtKB-SubCell"/>
</dbReference>
<dbReference type="GO" id="GO:0015483">
    <property type="term" value="F:long-chain fatty acid transporting porin activity"/>
    <property type="evidence" value="ECO:0007669"/>
    <property type="project" value="TreeGrafter"/>
</dbReference>
<dbReference type="FunFam" id="2.40.160.60:FF:000001">
    <property type="entry name" value="Long-chain fatty acid transporter FadL"/>
    <property type="match status" value="1"/>
</dbReference>
<dbReference type="Gene3D" id="2.40.160.60">
    <property type="entry name" value="Outer membrane protein transport protein (OMPP1/FadL/TodX)"/>
    <property type="match status" value="1"/>
</dbReference>
<dbReference type="InterPro" id="IPR005017">
    <property type="entry name" value="OMPP1/FadL/TodX"/>
</dbReference>
<dbReference type="NCBIfam" id="NF007988">
    <property type="entry name" value="PRK10716.1"/>
    <property type="match status" value="1"/>
</dbReference>
<dbReference type="PANTHER" id="PTHR35093:SF3">
    <property type="entry name" value="LONG-CHAIN FATTY ACID TRANSPORT PROTEIN"/>
    <property type="match status" value="1"/>
</dbReference>
<dbReference type="PANTHER" id="PTHR35093">
    <property type="entry name" value="OUTER MEMBRANE PROTEIN NMB0088-RELATED"/>
    <property type="match status" value="1"/>
</dbReference>
<dbReference type="Pfam" id="PF03349">
    <property type="entry name" value="Toluene_X"/>
    <property type="match status" value="1"/>
</dbReference>
<dbReference type="SUPFAM" id="SSF56935">
    <property type="entry name" value="Porins"/>
    <property type="match status" value="1"/>
</dbReference>
<reference key="1">
    <citation type="journal article" date="2002" name="Nucleic Acids Res.">
        <title>Genome sequence of Shigella flexneri 2a: insights into pathogenicity through comparison with genomes of Escherichia coli K12 and O157.</title>
        <authorList>
            <person name="Jin Q."/>
            <person name="Yuan Z."/>
            <person name="Xu J."/>
            <person name="Wang Y."/>
            <person name="Shen Y."/>
            <person name="Lu W."/>
            <person name="Wang J."/>
            <person name="Liu H."/>
            <person name="Yang J."/>
            <person name="Yang F."/>
            <person name="Zhang X."/>
            <person name="Zhang J."/>
            <person name="Yang G."/>
            <person name="Wu H."/>
            <person name="Qu D."/>
            <person name="Dong J."/>
            <person name="Sun L."/>
            <person name="Xue Y."/>
            <person name="Zhao A."/>
            <person name="Gao Y."/>
            <person name="Zhu J."/>
            <person name="Kan B."/>
            <person name="Ding K."/>
            <person name="Chen S."/>
            <person name="Cheng H."/>
            <person name="Yao Z."/>
            <person name="He B."/>
            <person name="Chen R."/>
            <person name="Ma D."/>
            <person name="Qiang B."/>
            <person name="Wen Y."/>
            <person name="Hou Y."/>
            <person name="Yu J."/>
        </authorList>
    </citation>
    <scope>NUCLEOTIDE SEQUENCE [LARGE SCALE GENOMIC DNA]</scope>
    <source>
        <strain>301 / Serotype 2a</strain>
    </source>
</reference>
<reference key="2">
    <citation type="journal article" date="2003" name="Infect. Immun.">
        <title>Complete genome sequence and comparative genomics of Shigella flexneri serotype 2a strain 2457T.</title>
        <authorList>
            <person name="Wei J."/>
            <person name="Goldberg M.B."/>
            <person name="Burland V."/>
            <person name="Venkatesan M.M."/>
            <person name="Deng W."/>
            <person name="Fournier G."/>
            <person name="Mayhew G.F."/>
            <person name="Plunkett G. III"/>
            <person name="Rose D.J."/>
            <person name="Darling A."/>
            <person name="Mau B."/>
            <person name="Perna N.T."/>
            <person name="Payne S.M."/>
            <person name="Runyen-Janecky L.J."/>
            <person name="Zhou S."/>
            <person name="Schwartz D.C."/>
            <person name="Blattner F.R."/>
        </authorList>
    </citation>
    <scope>NUCLEOTIDE SEQUENCE [LARGE SCALE GENOMIC DNA]</scope>
    <source>
        <strain>ATCC 700930 / 2457T / Serotype 2a</strain>
    </source>
</reference>
<gene>
    <name type="primary">fadL</name>
    <name type="ordered locus">SF2421</name>
    <name type="ordered locus">S2557</name>
</gene>
<accession>P59741</accession>
<evidence type="ECO:0000250" key="1"/>
<evidence type="ECO:0000305" key="2"/>
<comment type="function">
    <text evidence="1">Involved in translocation of long-chain fatty acids across the outer membrane. FadL may form a specific channel (By similarity).</text>
</comment>
<comment type="subcellular location">
    <subcellularLocation>
        <location evidence="1">Cell outer membrane</location>
        <topology evidence="1">Multi-pass membrane protein</topology>
    </subcellularLocation>
</comment>
<comment type="similarity">
    <text evidence="2">Belongs to the OmpP1/FadL family.</text>
</comment>
<sequence>MSQKTLFTKSALAVAVALISTQAWSAGFQLNEFSSSGLGRAYSGEGAIADDAGNVSRNPALITMFDRPTFSAGAVYIDPDVNISGTSPSGRSLKADNIAPTAWVPNMHFVAPINDQFGWGASITSNYGLATEFNDTYAGGSVGGTTDLETMNLNLSGAYRLNNAWSFGLGFNAIYARAKIERFAGDLGQLVAGQIMQSPAGQTPQGQALAATANGIDSNTKIAHLNGNQWGFGWNAGILYELDKNNRYALTYRSEVKIDFKGNYSSDLNRAFNNYGLPIPTATGGATQSGYLTLNLPEMWEVSGYNRVDPQWAIHYSLAYTSWSQFQQLKATSTSGDTLFQKHEGFKDAYRIALGTTYYYDDNWTFRTGIAFDDSPVPAQNRSISIPDQDRFWLSAGTTYAFNKDASVDVGVSYMHGQSVKINEGPYQFESEGKAWLFGTNFNYAF</sequence>
<proteinExistence type="inferred from homology"/>